<comment type="function">
    <text evidence="1">Catalyzes the GTP-dependent ribosomal translocation step during translation elongation. During this step, the ribosome changes from the pre-translocational (PRE) to the post-translocational (POST) state as the newly formed A-site-bound peptidyl-tRNA and P-site-bound deacylated tRNA move to the P and E sites, respectively. Catalyzes the coordinated movement of the two tRNA molecules, the mRNA and conformational changes in the ribosome.</text>
</comment>
<comment type="subcellular location">
    <subcellularLocation>
        <location evidence="1">Cytoplasm</location>
    </subcellularLocation>
</comment>
<comment type="similarity">
    <text evidence="1">Belongs to the TRAFAC class translation factor GTPase superfamily. Classic translation factor GTPase family. EF-G/EF-2 subfamily.</text>
</comment>
<name>EF2_METB6</name>
<feature type="chain" id="PRO_1000008845" description="Elongation factor 2">
    <location>
        <begin position="1"/>
        <end position="731"/>
    </location>
</feature>
<feature type="domain" description="tr-type G">
    <location>
        <begin position="19"/>
        <end position="260"/>
    </location>
</feature>
<feature type="binding site" evidence="1">
    <location>
        <begin position="28"/>
        <end position="35"/>
    </location>
    <ligand>
        <name>GTP</name>
        <dbReference type="ChEBI" id="CHEBI:37565"/>
    </ligand>
</feature>
<feature type="binding site" evidence="1">
    <location>
        <begin position="94"/>
        <end position="98"/>
    </location>
    <ligand>
        <name>GTP</name>
        <dbReference type="ChEBI" id="CHEBI:37565"/>
    </ligand>
</feature>
<feature type="binding site" evidence="1">
    <location>
        <begin position="148"/>
        <end position="151"/>
    </location>
    <ligand>
        <name>GTP</name>
        <dbReference type="ChEBI" id="CHEBI:37565"/>
    </ligand>
</feature>
<feature type="modified residue" description="Diphthamide" evidence="1">
    <location>
        <position position="597"/>
    </location>
</feature>
<evidence type="ECO:0000255" key="1">
    <source>
        <dbReference type="HAMAP-Rule" id="MF_00054"/>
    </source>
</evidence>
<keyword id="KW-0963">Cytoplasm</keyword>
<keyword id="KW-0251">Elongation factor</keyword>
<keyword id="KW-0342">GTP-binding</keyword>
<keyword id="KW-0547">Nucleotide-binding</keyword>
<keyword id="KW-0648">Protein biosynthesis</keyword>
<keyword id="KW-1185">Reference proteome</keyword>
<organism>
    <name type="scientific">Methanoregula boonei (strain DSM 21154 / JCM 14090 / 6A8)</name>
    <dbReference type="NCBI Taxonomy" id="456442"/>
    <lineage>
        <taxon>Archaea</taxon>
        <taxon>Methanobacteriati</taxon>
        <taxon>Methanobacteriota</taxon>
        <taxon>Stenosarchaea group</taxon>
        <taxon>Methanomicrobia</taxon>
        <taxon>Methanomicrobiales</taxon>
        <taxon>Methanoregulaceae</taxon>
        <taxon>Methanoregula</taxon>
    </lineage>
</organism>
<protein>
    <recommendedName>
        <fullName evidence="1">Elongation factor 2</fullName>
        <shortName evidence="1">EF-2</shortName>
    </recommendedName>
</protein>
<accession>A7I4X4</accession>
<reference key="1">
    <citation type="journal article" date="2015" name="Microbiology">
        <title>Genome of Methanoregula boonei 6A8 reveals adaptations to oligotrophic peatland environments.</title>
        <authorList>
            <person name="Braeuer S."/>
            <person name="Cadillo-Quiroz H."/>
            <person name="Kyrpides N."/>
            <person name="Woyke T."/>
            <person name="Goodwin L."/>
            <person name="Detter C."/>
            <person name="Podell S."/>
            <person name="Yavitt J.B."/>
            <person name="Zinder S.H."/>
        </authorList>
    </citation>
    <scope>NUCLEOTIDE SEQUENCE [LARGE SCALE GENOMIC DNA]</scope>
    <source>
        <strain>DSM 21154 / JCM 14090 / 6A8</strain>
    </source>
</reference>
<proteinExistence type="inferred from homology"/>
<gene>
    <name evidence="1" type="primary">fusA</name>
    <name type="ordered locus">Mboo_0263</name>
</gene>
<dbReference type="EMBL" id="CP000780">
    <property type="protein sequence ID" value="ABS54785.1"/>
    <property type="molecule type" value="Genomic_DNA"/>
</dbReference>
<dbReference type="RefSeq" id="WP_011991273.1">
    <property type="nucleotide sequence ID" value="NC_009712.1"/>
</dbReference>
<dbReference type="SMR" id="A7I4X4"/>
<dbReference type="STRING" id="456442.Mboo_0263"/>
<dbReference type="GeneID" id="5410253"/>
<dbReference type="KEGG" id="mbn:Mboo_0263"/>
<dbReference type="eggNOG" id="arCOG01559">
    <property type="taxonomic scope" value="Archaea"/>
</dbReference>
<dbReference type="HOGENOM" id="CLU_002794_11_1_2"/>
<dbReference type="OrthoDB" id="6290at2157"/>
<dbReference type="Proteomes" id="UP000002408">
    <property type="component" value="Chromosome"/>
</dbReference>
<dbReference type="GO" id="GO:0005829">
    <property type="term" value="C:cytosol"/>
    <property type="evidence" value="ECO:0007669"/>
    <property type="project" value="TreeGrafter"/>
</dbReference>
<dbReference type="GO" id="GO:1990904">
    <property type="term" value="C:ribonucleoprotein complex"/>
    <property type="evidence" value="ECO:0007669"/>
    <property type="project" value="TreeGrafter"/>
</dbReference>
<dbReference type="GO" id="GO:0005525">
    <property type="term" value="F:GTP binding"/>
    <property type="evidence" value="ECO:0007669"/>
    <property type="project" value="UniProtKB-UniRule"/>
</dbReference>
<dbReference type="GO" id="GO:0003924">
    <property type="term" value="F:GTPase activity"/>
    <property type="evidence" value="ECO:0007669"/>
    <property type="project" value="InterPro"/>
</dbReference>
<dbReference type="GO" id="GO:0003746">
    <property type="term" value="F:translation elongation factor activity"/>
    <property type="evidence" value="ECO:0007669"/>
    <property type="project" value="UniProtKB-UniRule"/>
</dbReference>
<dbReference type="CDD" id="cd01681">
    <property type="entry name" value="aeEF2_snRNP_like_IV"/>
    <property type="match status" value="1"/>
</dbReference>
<dbReference type="CDD" id="cd01885">
    <property type="entry name" value="EF2"/>
    <property type="match status" value="1"/>
</dbReference>
<dbReference type="CDD" id="cd16268">
    <property type="entry name" value="EF2_II"/>
    <property type="match status" value="1"/>
</dbReference>
<dbReference type="CDD" id="cd16261">
    <property type="entry name" value="EF2_snRNP_III"/>
    <property type="match status" value="1"/>
</dbReference>
<dbReference type="CDD" id="cd01514">
    <property type="entry name" value="Elongation_Factor_C"/>
    <property type="match status" value="1"/>
</dbReference>
<dbReference type="FunFam" id="3.30.70.240:FF:000010">
    <property type="entry name" value="Elongation factor 2"/>
    <property type="match status" value="1"/>
</dbReference>
<dbReference type="FunFam" id="3.40.50.300:FF:000684">
    <property type="entry name" value="Elongation factor 2"/>
    <property type="match status" value="1"/>
</dbReference>
<dbReference type="FunFam" id="3.30.70.870:FF:000002">
    <property type="entry name" value="Translation elongation factor 2"/>
    <property type="match status" value="1"/>
</dbReference>
<dbReference type="Gene3D" id="3.30.230.10">
    <property type="match status" value="1"/>
</dbReference>
<dbReference type="Gene3D" id="3.30.70.240">
    <property type="match status" value="1"/>
</dbReference>
<dbReference type="Gene3D" id="3.30.70.870">
    <property type="entry name" value="Elongation Factor G (Translational Gtpase), domain 3"/>
    <property type="match status" value="1"/>
</dbReference>
<dbReference type="Gene3D" id="3.40.50.300">
    <property type="entry name" value="P-loop containing nucleotide triphosphate hydrolases"/>
    <property type="match status" value="1"/>
</dbReference>
<dbReference type="Gene3D" id="2.40.30.10">
    <property type="entry name" value="Translation factors"/>
    <property type="match status" value="1"/>
</dbReference>
<dbReference type="HAMAP" id="MF_00054_A">
    <property type="entry name" value="EF_G_EF_2_A"/>
    <property type="match status" value="1"/>
</dbReference>
<dbReference type="InterPro" id="IPR041095">
    <property type="entry name" value="EFG_II"/>
</dbReference>
<dbReference type="InterPro" id="IPR035647">
    <property type="entry name" value="EFG_III/V"/>
</dbReference>
<dbReference type="InterPro" id="IPR000640">
    <property type="entry name" value="EFG_V-like"/>
</dbReference>
<dbReference type="InterPro" id="IPR004161">
    <property type="entry name" value="EFTu-like_2"/>
</dbReference>
<dbReference type="InterPro" id="IPR031157">
    <property type="entry name" value="G_TR_CS"/>
</dbReference>
<dbReference type="InterPro" id="IPR027417">
    <property type="entry name" value="P-loop_NTPase"/>
</dbReference>
<dbReference type="InterPro" id="IPR020568">
    <property type="entry name" value="Ribosomal_Su5_D2-typ_SF"/>
</dbReference>
<dbReference type="InterPro" id="IPR014721">
    <property type="entry name" value="Ribsml_uS5_D2-typ_fold_subgr"/>
</dbReference>
<dbReference type="InterPro" id="IPR005225">
    <property type="entry name" value="Small_GTP-bd"/>
</dbReference>
<dbReference type="InterPro" id="IPR000795">
    <property type="entry name" value="T_Tr_GTP-bd_dom"/>
</dbReference>
<dbReference type="InterPro" id="IPR009000">
    <property type="entry name" value="Transl_B-barrel_sf"/>
</dbReference>
<dbReference type="InterPro" id="IPR004543">
    <property type="entry name" value="Transl_elong_EFG/EF2_arc"/>
</dbReference>
<dbReference type="InterPro" id="IPR005517">
    <property type="entry name" value="Transl_elong_EFG/EF2_IV"/>
</dbReference>
<dbReference type="NCBIfam" id="TIGR00490">
    <property type="entry name" value="aEF-2"/>
    <property type="match status" value="1"/>
</dbReference>
<dbReference type="NCBIfam" id="TIGR00231">
    <property type="entry name" value="small_GTP"/>
    <property type="match status" value="1"/>
</dbReference>
<dbReference type="PANTHER" id="PTHR42908:SF3">
    <property type="entry name" value="ELONGATION FACTOR-LIKE GTPASE 1"/>
    <property type="match status" value="1"/>
</dbReference>
<dbReference type="PANTHER" id="PTHR42908">
    <property type="entry name" value="TRANSLATION ELONGATION FACTOR-RELATED"/>
    <property type="match status" value="1"/>
</dbReference>
<dbReference type="Pfam" id="PF00679">
    <property type="entry name" value="EFG_C"/>
    <property type="match status" value="1"/>
</dbReference>
<dbReference type="Pfam" id="PF14492">
    <property type="entry name" value="EFG_III"/>
    <property type="match status" value="1"/>
</dbReference>
<dbReference type="Pfam" id="PF03764">
    <property type="entry name" value="EFG_IV"/>
    <property type="match status" value="1"/>
</dbReference>
<dbReference type="Pfam" id="PF00009">
    <property type="entry name" value="GTP_EFTU"/>
    <property type="match status" value="1"/>
</dbReference>
<dbReference type="Pfam" id="PF03144">
    <property type="entry name" value="GTP_EFTU_D2"/>
    <property type="match status" value="1"/>
</dbReference>
<dbReference type="PRINTS" id="PR00315">
    <property type="entry name" value="ELONGATNFCT"/>
</dbReference>
<dbReference type="SMART" id="SM00838">
    <property type="entry name" value="EFG_C"/>
    <property type="match status" value="1"/>
</dbReference>
<dbReference type="SMART" id="SM00889">
    <property type="entry name" value="EFG_IV"/>
    <property type="match status" value="1"/>
</dbReference>
<dbReference type="SUPFAM" id="SSF54980">
    <property type="entry name" value="EF-G C-terminal domain-like"/>
    <property type="match status" value="2"/>
</dbReference>
<dbReference type="SUPFAM" id="SSF52540">
    <property type="entry name" value="P-loop containing nucleoside triphosphate hydrolases"/>
    <property type="match status" value="1"/>
</dbReference>
<dbReference type="SUPFAM" id="SSF54211">
    <property type="entry name" value="Ribosomal protein S5 domain 2-like"/>
    <property type="match status" value="1"/>
</dbReference>
<dbReference type="SUPFAM" id="SSF50447">
    <property type="entry name" value="Translation proteins"/>
    <property type="match status" value="1"/>
</dbReference>
<dbReference type="PROSITE" id="PS00301">
    <property type="entry name" value="G_TR_1"/>
    <property type="match status" value="1"/>
</dbReference>
<dbReference type="PROSITE" id="PS51722">
    <property type="entry name" value="G_TR_2"/>
    <property type="match status" value="1"/>
</dbReference>
<sequence>MSRGKKTVERVVELMKDPKHIRNIGIVAHIDHGKTTLSDNLLAGAGIISEELAGKQLFMDSDAEEQARGITIDASNVSMVHEVEGQDYLINMIDTPGHVDFGGDVTRAMRAVDGAVVLVDAVEGTMPQTETVLRQALKEQVRPVLFINKVDRLVNELKVDETEMQIRLGKVIDKVNKLIKGMNEDLYNNGWKLDASKGTVAFGSALYNWAVSVPYMKKGGVSFKDVFEKCRAGDMKYLAKNSPLYEVVLDMVVHHLPNPLEAQPRRVNVIWHGDHSTKEGKAMLACDPNGPATMMVTDISFDPHAGEVATGRLFSGTLRRGDGLYVMGSAKKENRLQQVGIFMGPKRVEVEEIVAGNIAAVTGLKDAIVGSTVTSLMEMSPFESLKHYSEPVMTVAVEAKNMKDLPKLVEVLRQVAKEDPTLGIAINEETGEHLISGMGELHLEIVTGRIKRDKGVEIVTSEPIVVYRETVTGKVEDVEGKSPNRHNRFYFTLEPLPEEIVNLIKAGEITMNQQAIERRDVLLKAGMDKDEAKNVKHIKGTNMLIDMTKGIQYLNETMELIIEGINEALAGGPLADEPVQNLKMTLTDVKLHEDAIHRGPAQVIPAVRGAIKGGMLIAGDSLLEPVQKIQISVPMDQMGAATSQIQGRRGQVFDMQSEGDTITVVGKAPVAELFGFAGDIRSATEGRAMWNTEFAGFELVPNNLVKDVVVAIRKRKGLKEQMPTPSDYLSV</sequence>